<comment type="function">
    <text evidence="1">Catalyzes the hydrolysis of N-succinyl-L,L-diaminopimelic acid (SDAP), forming succinate and LL-2,6-diaminopimelate (DAP), an intermediate involved in the bacterial biosynthesis of lysine and meso-diaminopimelic acid, an essential component of bacterial cell walls.</text>
</comment>
<comment type="catalytic activity">
    <reaction evidence="1">
        <text>N-succinyl-(2S,6S)-2,6-diaminopimelate + H2O = (2S,6S)-2,6-diaminopimelate + succinate</text>
        <dbReference type="Rhea" id="RHEA:22608"/>
        <dbReference type="ChEBI" id="CHEBI:15377"/>
        <dbReference type="ChEBI" id="CHEBI:30031"/>
        <dbReference type="ChEBI" id="CHEBI:57609"/>
        <dbReference type="ChEBI" id="CHEBI:58087"/>
        <dbReference type="EC" id="3.5.1.18"/>
    </reaction>
</comment>
<comment type="cofactor">
    <cofactor evidence="1">
        <name>Zn(2+)</name>
        <dbReference type="ChEBI" id="CHEBI:29105"/>
    </cofactor>
    <cofactor evidence="1">
        <name>Co(2+)</name>
        <dbReference type="ChEBI" id="CHEBI:48828"/>
    </cofactor>
    <text evidence="1">Binds 2 Zn(2+) or Co(2+) ions per subunit.</text>
</comment>
<comment type="pathway">
    <text evidence="1">Amino-acid biosynthesis; L-lysine biosynthesis via DAP pathway; LL-2,6-diaminopimelate from (S)-tetrahydrodipicolinate (succinylase route): step 3/3.</text>
</comment>
<comment type="subunit">
    <text evidence="1">Homodimer.</text>
</comment>
<comment type="similarity">
    <text evidence="1">Belongs to the peptidase M20A family. DapE subfamily.</text>
</comment>
<proteinExistence type="inferred from homology"/>
<reference key="1">
    <citation type="journal article" date="2006" name="Nat. Biotechnol.">
        <title>Complete genome sequence of the entomopathogenic and metabolically versatile soil bacterium Pseudomonas entomophila.</title>
        <authorList>
            <person name="Vodovar N."/>
            <person name="Vallenet D."/>
            <person name="Cruveiller S."/>
            <person name="Rouy Z."/>
            <person name="Barbe V."/>
            <person name="Acosta C."/>
            <person name="Cattolico L."/>
            <person name="Jubin C."/>
            <person name="Lajus A."/>
            <person name="Segurens B."/>
            <person name="Vacherie B."/>
            <person name="Wincker P."/>
            <person name="Weissenbach J."/>
            <person name="Lemaitre B."/>
            <person name="Medigue C."/>
            <person name="Boccard F."/>
        </authorList>
    </citation>
    <scope>NUCLEOTIDE SEQUENCE [LARGE SCALE GENOMIC DNA]</scope>
    <source>
        <strain>L48</strain>
    </source>
</reference>
<gene>
    <name evidence="1" type="primary">dapE</name>
    <name type="ordered locus">PSEEN4232</name>
</gene>
<feature type="chain" id="PRO_0000375657" description="Succinyl-diaminopimelate desuccinylase">
    <location>
        <begin position="1"/>
        <end position="383"/>
    </location>
</feature>
<feature type="active site" evidence="1">
    <location>
        <position position="75"/>
    </location>
</feature>
<feature type="active site" description="Proton acceptor" evidence="1">
    <location>
        <position position="141"/>
    </location>
</feature>
<feature type="binding site" evidence="1">
    <location>
        <position position="73"/>
    </location>
    <ligand>
        <name>Zn(2+)</name>
        <dbReference type="ChEBI" id="CHEBI:29105"/>
        <label>1</label>
    </ligand>
</feature>
<feature type="binding site" evidence="1">
    <location>
        <position position="107"/>
    </location>
    <ligand>
        <name>Zn(2+)</name>
        <dbReference type="ChEBI" id="CHEBI:29105"/>
        <label>1</label>
    </ligand>
</feature>
<feature type="binding site" evidence="1">
    <location>
        <position position="107"/>
    </location>
    <ligand>
        <name>Zn(2+)</name>
        <dbReference type="ChEBI" id="CHEBI:29105"/>
        <label>2</label>
    </ligand>
</feature>
<feature type="binding site" evidence="1">
    <location>
        <position position="142"/>
    </location>
    <ligand>
        <name>Zn(2+)</name>
        <dbReference type="ChEBI" id="CHEBI:29105"/>
        <label>2</label>
    </ligand>
</feature>
<feature type="binding site" evidence="1">
    <location>
        <position position="170"/>
    </location>
    <ligand>
        <name>Zn(2+)</name>
        <dbReference type="ChEBI" id="CHEBI:29105"/>
        <label>1</label>
    </ligand>
</feature>
<feature type="binding site" evidence="1">
    <location>
        <position position="356"/>
    </location>
    <ligand>
        <name>Zn(2+)</name>
        <dbReference type="ChEBI" id="CHEBI:29105"/>
        <label>2</label>
    </ligand>
</feature>
<accession>Q1I614</accession>
<sequence length="383" mass="41361">MTAPAELSPTLQLACDLIRRPSVTPVDADCQTQMMNRLGAVGFQLEPMRFEDVDNFWATHGTQDGPVLCFAGHTDVVPTGPVQQWQHEPFEALIDADGMLCGRGAADMKGSLASMVVASERFVQDYPNHRGKVAFLITSDEEGPAHHGTKAVVELLKARNERLDWCIVGEPSSTTLLGDVVKNGRRGSLGAKLTVRGKQGHVAYPHLARNPIHLAAPALAELAAEHWDEGNAFFPPTSFQISNLNSGTGATNVVPGDLTALFNFRFSTESTVEGLQERVAAILDKHQLEWSIDWALSGLPFLTEPGELLDAVSSSIKAVTGRETQPSTSGGTSDGRFIATMGTQVVELGPVNATIHQVDERILASDLDLLTEIYYQTLVRLLA</sequence>
<dbReference type="EC" id="3.5.1.18" evidence="1"/>
<dbReference type="EMBL" id="CT573326">
    <property type="protein sequence ID" value="CAK16921.1"/>
    <property type="molecule type" value="Genomic_DNA"/>
</dbReference>
<dbReference type="RefSeq" id="WP_011535292.1">
    <property type="nucleotide sequence ID" value="NC_008027.1"/>
</dbReference>
<dbReference type="SMR" id="Q1I614"/>
<dbReference type="STRING" id="384676.PSEEN4232"/>
<dbReference type="GeneID" id="32807239"/>
<dbReference type="KEGG" id="pen:PSEEN4232"/>
<dbReference type="eggNOG" id="COG0624">
    <property type="taxonomic scope" value="Bacteria"/>
</dbReference>
<dbReference type="HOGENOM" id="CLU_021802_4_0_6"/>
<dbReference type="OrthoDB" id="9809784at2"/>
<dbReference type="UniPathway" id="UPA00034">
    <property type="reaction ID" value="UER00021"/>
</dbReference>
<dbReference type="Proteomes" id="UP000000658">
    <property type="component" value="Chromosome"/>
</dbReference>
<dbReference type="GO" id="GO:0008777">
    <property type="term" value="F:acetylornithine deacetylase activity"/>
    <property type="evidence" value="ECO:0007669"/>
    <property type="project" value="TreeGrafter"/>
</dbReference>
<dbReference type="GO" id="GO:0050897">
    <property type="term" value="F:cobalt ion binding"/>
    <property type="evidence" value="ECO:0007669"/>
    <property type="project" value="UniProtKB-UniRule"/>
</dbReference>
<dbReference type="GO" id="GO:0009014">
    <property type="term" value="F:succinyl-diaminopimelate desuccinylase activity"/>
    <property type="evidence" value="ECO:0007669"/>
    <property type="project" value="UniProtKB-UniRule"/>
</dbReference>
<dbReference type="GO" id="GO:0008270">
    <property type="term" value="F:zinc ion binding"/>
    <property type="evidence" value="ECO:0007669"/>
    <property type="project" value="UniProtKB-UniRule"/>
</dbReference>
<dbReference type="GO" id="GO:0019877">
    <property type="term" value="P:diaminopimelate biosynthetic process"/>
    <property type="evidence" value="ECO:0007669"/>
    <property type="project" value="UniProtKB-UniRule"/>
</dbReference>
<dbReference type="GO" id="GO:0006526">
    <property type="term" value="P:L-arginine biosynthetic process"/>
    <property type="evidence" value="ECO:0007669"/>
    <property type="project" value="TreeGrafter"/>
</dbReference>
<dbReference type="GO" id="GO:0009089">
    <property type="term" value="P:lysine biosynthetic process via diaminopimelate"/>
    <property type="evidence" value="ECO:0007669"/>
    <property type="project" value="UniProtKB-UniRule"/>
</dbReference>
<dbReference type="CDD" id="cd03891">
    <property type="entry name" value="M20_DapE_proteobac"/>
    <property type="match status" value="1"/>
</dbReference>
<dbReference type="FunFam" id="3.30.70.360:FF:000011">
    <property type="entry name" value="Succinyl-diaminopimelate desuccinylase"/>
    <property type="match status" value="1"/>
</dbReference>
<dbReference type="FunFam" id="3.40.630.10:FF:000005">
    <property type="entry name" value="Succinyl-diaminopimelate desuccinylase"/>
    <property type="match status" value="1"/>
</dbReference>
<dbReference type="Gene3D" id="1.10.150.900">
    <property type="match status" value="1"/>
</dbReference>
<dbReference type="Gene3D" id="3.30.70.360">
    <property type="match status" value="1"/>
</dbReference>
<dbReference type="Gene3D" id="3.40.630.10">
    <property type="entry name" value="Zn peptidases"/>
    <property type="match status" value="1"/>
</dbReference>
<dbReference type="HAMAP" id="MF_01690">
    <property type="entry name" value="DapE"/>
    <property type="match status" value="1"/>
</dbReference>
<dbReference type="InterPro" id="IPR001261">
    <property type="entry name" value="ArgE/DapE_CS"/>
</dbReference>
<dbReference type="InterPro" id="IPR036264">
    <property type="entry name" value="Bact_exopeptidase_dim_dom"/>
</dbReference>
<dbReference type="InterPro" id="IPR005941">
    <property type="entry name" value="DapE_proteobac"/>
</dbReference>
<dbReference type="InterPro" id="IPR002933">
    <property type="entry name" value="Peptidase_M20"/>
</dbReference>
<dbReference type="InterPro" id="IPR011650">
    <property type="entry name" value="Peptidase_M20_dimer"/>
</dbReference>
<dbReference type="InterPro" id="IPR050072">
    <property type="entry name" value="Peptidase_M20A"/>
</dbReference>
<dbReference type="NCBIfam" id="TIGR01246">
    <property type="entry name" value="dapE_proteo"/>
    <property type="match status" value="1"/>
</dbReference>
<dbReference type="NCBIfam" id="NF009557">
    <property type="entry name" value="PRK13009.1"/>
    <property type="match status" value="1"/>
</dbReference>
<dbReference type="PANTHER" id="PTHR43808">
    <property type="entry name" value="ACETYLORNITHINE DEACETYLASE"/>
    <property type="match status" value="1"/>
</dbReference>
<dbReference type="PANTHER" id="PTHR43808:SF31">
    <property type="entry name" value="N-ACETYL-L-CITRULLINE DEACETYLASE"/>
    <property type="match status" value="1"/>
</dbReference>
<dbReference type="Pfam" id="PF07687">
    <property type="entry name" value="M20_dimer"/>
    <property type="match status" value="1"/>
</dbReference>
<dbReference type="Pfam" id="PF01546">
    <property type="entry name" value="Peptidase_M20"/>
    <property type="match status" value="1"/>
</dbReference>
<dbReference type="SUPFAM" id="SSF55031">
    <property type="entry name" value="Bacterial exopeptidase dimerisation domain"/>
    <property type="match status" value="1"/>
</dbReference>
<dbReference type="SUPFAM" id="SSF53187">
    <property type="entry name" value="Zn-dependent exopeptidases"/>
    <property type="match status" value="1"/>
</dbReference>
<dbReference type="PROSITE" id="PS00759">
    <property type="entry name" value="ARGE_DAPE_CPG2_2"/>
    <property type="match status" value="1"/>
</dbReference>
<organism>
    <name type="scientific">Pseudomonas entomophila (strain L48)</name>
    <dbReference type="NCBI Taxonomy" id="384676"/>
    <lineage>
        <taxon>Bacteria</taxon>
        <taxon>Pseudomonadati</taxon>
        <taxon>Pseudomonadota</taxon>
        <taxon>Gammaproteobacteria</taxon>
        <taxon>Pseudomonadales</taxon>
        <taxon>Pseudomonadaceae</taxon>
        <taxon>Pseudomonas</taxon>
    </lineage>
</organism>
<keyword id="KW-0028">Amino-acid biosynthesis</keyword>
<keyword id="KW-0170">Cobalt</keyword>
<keyword id="KW-0220">Diaminopimelate biosynthesis</keyword>
<keyword id="KW-0378">Hydrolase</keyword>
<keyword id="KW-0457">Lysine biosynthesis</keyword>
<keyword id="KW-0479">Metal-binding</keyword>
<keyword id="KW-0862">Zinc</keyword>
<protein>
    <recommendedName>
        <fullName evidence="1">Succinyl-diaminopimelate desuccinylase</fullName>
        <shortName evidence="1">SDAP desuccinylase</shortName>
        <ecNumber evidence="1">3.5.1.18</ecNumber>
    </recommendedName>
    <alternativeName>
        <fullName evidence="1">N-succinyl-LL-2,6-diaminoheptanedioate amidohydrolase</fullName>
    </alternativeName>
</protein>
<name>DAPE_PSEE4</name>
<evidence type="ECO:0000255" key="1">
    <source>
        <dbReference type="HAMAP-Rule" id="MF_01690"/>
    </source>
</evidence>